<proteinExistence type="evidence at protein level"/>
<gene>
    <name evidence="6" type="primary">CPL1</name>
    <name evidence="8" type="ORF">CNAG_02797</name>
</gene>
<sequence length="199" mass="21084">MFSIPPSVRRLVFLFLIAAPLLSIVLPVAAAPAGVDPPSKLQPRAPQPSRRMGATKRSKKIEPLKKKDYSSFLCPGGSVACPIPGDEVSPSSVEALEKSLNSLADWFKVGFECVELETELNSCGGCLALGSGQDCALIENARTTGCENGSCQVYSCFDGYVVSPDRTSCVKRGSTIPATPVTAVNVEEFVADDQLPFGQ</sequence>
<protein>
    <recommendedName>
        <fullName evidence="6">Protein CPL1</fullName>
    </recommendedName>
</protein>
<reference evidence="9" key="1">
    <citation type="journal article" date="2014" name="PLoS Genet.">
        <title>Analysis of the genome and transcriptome of Cryptococcus neoformans var. grubii reveals complex RNA expression and microevolution leading to virulence attenuation.</title>
        <authorList>
            <person name="Janbon G."/>
            <person name="Ormerod K.L."/>
            <person name="Paulet D."/>
            <person name="Byrnes E.J. III"/>
            <person name="Yadav V."/>
            <person name="Chatterjee G."/>
            <person name="Mullapudi N."/>
            <person name="Hon C.-C."/>
            <person name="Billmyre R.B."/>
            <person name="Brunel F."/>
            <person name="Bahn Y.-S."/>
            <person name="Chen W."/>
            <person name="Chen Y."/>
            <person name="Chow E.W.L."/>
            <person name="Coppee J.-Y."/>
            <person name="Floyd-Averette A."/>
            <person name="Gaillardin C."/>
            <person name="Gerik K.J."/>
            <person name="Goldberg J."/>
            <person name="Gonzalez-Hilarion S."/>
            <person name="Gujja S."/>
            <person name="Hamlin J.L."/>
            <person name="Hsueh Y.-P."/>
            <person name="Ianiri G."/>
            <person name="Jones S."/>
            <person name="Kodira C.D."/>
            <person name="Kozubowski L."/>
            <person name="Lam W."/>
            <person name="Marra M."/>
            <person name="Mesner L.D."/>
            <person name="Mieczkowski P.A."/>
            <person name="Moyrand F."/>
            <person name="Nielsen K."/>
            <person name="Proux C."/>
            <person name="Rossignol T."/>
            <person name="Schein J.E."/>
            <person name="Sun S."/>
            <person name="Wollschlaeger C."/>
            <person name="Wood I.A."/>
            <person name="Zeng Q."/>
            <person name="Neuveglise C."/>
            <person name="Newlon C.S."/>
            <person name="Perfect J.R."/>
            <person name="Lodge J.K."/>
            <person name="Idnurm A."/>
            <person name="Stajich J.E."/>
            <person name="Kronstad J.W."/>
            <person name="Sanyal K."/>
            <person name="Heitman J."/>
            <person name="Fraser J.A."/>
            <person name="Cuomo C.A."/>
            <person name="Dietrich F.S."/>
        </authorList>
    </citation>
    <scope>NUCLEOTIDE SEQUENCE [LARGE SCALE GENOMIC DNA]</scope>
    <source>
        <strain>H99 / ATCC 208821 / CBS 10515 / FGSC 9487</strain>
    </source>
</reference>
<reference evidence="7" key="2">
    <citation type="journal article" date="2008" name="Cell">
        <title>Systematic genetic analysis of virulence in the human fungal pathogen Cryptococcus neoformans.</title>
        <authorList>
            <person name="Liu O.W."/>
            <person name="Chun C.D."/>
            <person name="Chow E.D."/>
            <person name="Chen C."/>
            <person name="Madhani H.D."/>
            <person name="Noble S.M."/>
        </authorList>
    </citation>
    <scope>DISRUPTION PHENOTYPE</scope>
</reference>
<reference evidence="7" key="3">
    <citation type="journal article" date="2022" name="Nature">
        <title>Secreted fungal virulence effector triggers allergic inflammation via TLR4.</title>
        <authorList>
            <person name="Dang E.V."/>
            <person name="Lei S."/>
            <person name="Radkov A."/>
            <person name="Volk R.F."/>
            <person name="Zaro B.W."/>
            <person name="Madhani H.D."/>
        </authorList>
    </citation>
    <scope>FUNCTION</scope>
    <scope>SUBCELLULAR LOCATION</scope>
    <scope>INDUCTION</scope>
    <scope>DISRUPTION PHENOTYPE</scope>
    <scope>MUTAGENESIS OF TYR-160</scope>
    <source>
        <strain evidence="5">KN99</strain>
    </source>
</reference>
<keyword id="KW-0325">Glycoprotein</keyword>
<keyword id="KW-0964">Secreted</keyword>
<keyword id="KW-0732">Signal</keyword>
<keyword id="KW-0843">Virulence</keyword>
<organism evidence="9">
    <name type="scientific">Cryptococcus neoformans var. grubii serotype A (strain H99 / ATCC 208821 / CBS 10515 / FGSC 9487)</name>
    <name type="common">Filobasidiella neoformans var. grubii</name>
    <dbReference type="NCBI Taxonomy" id="235443"/>
    <lineage>
        <taxon>Eukaryota</taxon>
        <taxon>Fungi</taxon>
        <taxon>Dikarya</taxon>
        <taxon>Basidiomycota</taxon>
        <taxon>Agaricomycotina</taxon>
        <taxon>Tremellomycetes</taxon>
        <taxon>Tremellales</taxon>
        <taxon>Cryptococcaceae</taxon>
        <taxon>Cryptococcus</taxon>
        <taxon>Cryptococcus neoformans species complex</taxon>
    </lineage>
</organism>
<feature type="signal peptide" evidence="1">
    <location>
        <begin position="1"/>
        <end position="30"/>
    </location>
</feature>
<feature type="chain" id="PRO_5003828026" description="Protein CPL1" evidence="1">
    <location>
        <begin position="31"/>
        <end position="199"/>
    </location>
</feature>
<feature type="region of interest" description="Disordered" evidence="3">
    <location>
        <begin position="34"/>
        <end position="58"/>
    </location>
</feature>
<feature type="glycosylation site" description="N-linked (GlcNAc...) asparagine" evidence="2">
    <location>
        <position position="148"/>
    </location>
</feature>
<feature type="mutagenesis site" description="Abolishes Il4-independent and Il4-dependent Arg1/arginase-1 expression in mouse bone marrow-derived macrophages (BMDCs)." evidence="5">
    <original>Y</original>
    <variation>A</variation>
    <location>
        <position position="160"/>
    </location>
</feature>
<name>CPL1V_CRYNH</name>
<comment type="function">
    <text evidence="5">Virulence factor which promotes fungal virulence by enhancing type 2 inflammation in the mouse host (PubMed:35896747). Likely binds mouse Tlr4 independently of Ly96/Md2 and activates Tlr4 signaling to drive Stat3 phosphorylation in interstitial macrophages, which promotes the initial induction of Arg1/arginase-1 and increases macrophage sensitivity to Il4 signaling (PubMed:35896747).</text>
</comment>
<comment type="subcellular location">
    <subcellularLocation>
        <location evidence="5">Secreted</location>
    </subcellularLocation>
</comment>
<comment type="induction">
    <text evidence="5">Induced at 37 degrees Celsius in culture medium for mammalian cells.</text>
</comment>
<comment type="disruption phenotype">
    <text evidence="4 5">Intranasal infection of C57BL/6J mice with knockout fungi severely impairs Arg1 mRNA expression in lung interstitial macrophages, causes a modest reduction in lung eosinophil recruitment while levels of Il4-dependent IgG1 class switching and cytokine production in CD4(+) T-cell are not affected (PubMed:35896747). Causes a decrease in type 2 inflammation and in fungal burden in the lung and the brain resulting in mouse survival (PubMed:35896747). Abolishes Il4-independent and Il4-dependent Arg1 expression in mouse bone marrow-derived macrophages (mBMDCs) (PubMed:35896747). Partially defective in suppressing iNOS expression and nitric oxide production induced by lipopolysaccharide (LPS) and Ifng in mBMDCs (PubMed:35896747). No growth defect at 37 degrees Celsius (PubMed:35896747). Impairs capsule formation (PubMed:18854164). However, in strain KN99, appears to be dispensable for capsule formation (PubMed:35896747).</text>
</comment>
<accession>J9VQE5</accession>
<evidence type="ECO:0000255" key="1"/>
<evidence type="ECO:0000255" key="2">
    <source>
        <dbReference type="PROSITE-ProRule" id="PRU00498"/>
    </source>
</evidence>
<evidence type="ECO:0000256" key="3">
    <source>
        <dbReference type="SAM" id="MobiDB-lite"/>
    </source>
</evidence>
<evidence type="ECO:0000269" key="4">
    <source>
    </source>
</evidence>
<evidence type="ECO:0000269" key="5">
    <source>
    </source>
</evidence>
<evidence type="ECO:0000303" key="6">
    <source>
    </source>
</evidence>
<evidence type="ECO:0000305" key="7"/>
<evidence type="ECO:0000312" key="8">
    <source>
        <dbReference type="EMBL" id="AFR93895.1"/>
    </source>
</evidence>
<evidence type="ECO:0000312" key="9">
    <source>
        <dbReference type="Proteomes" id="UP000010091"/>
    </source>
</evidence>
<dbReference type="EMBL" id="CP003822">
    <property type="protein sequence ID" value="AFR93895.1"/>
    <property type="molecule type" value="Genomic_DNA"/>
</dbReference>
<dbReference type="RefSeq" id="XP_012048140.1">
    <property type="nucleotide sequence ID" value="XM_012192750.1"/>
</dbReference>
<dbReference type="GeneID" id="23886355"/>
<dbReference type="KEGG" id="cng:CNAG_02797"/>
<dbReference type="VEuPathDB" id="FungiDB:CNAG_02797"/>
<dbReference type="HOGENOM" id="CLU_115537_0_0_1"/>
<dbReference type="OrthoDB" id="5084at5206"/>
<dbReference type="PHI-base" id="PHI:123364"/>
<dbReference type="Proteomes" id="UP000010091">
    <property type="component" value="Chromosome 3"/>
</dbReference>
<dbReference type="GO" id="GO:0005576">
    <property type="term" value="C:extracellular region"/>
    <property type="evidence" value="ECO:0000315"/>
    <property type="project" value="UniProtKB"/>
</dbReference>
<dbReference type="GO" id="GO:0140404">
    <property type="term" value="P:effector-mediated perturbation of host innate immune response by symbiont"/>
    <property type="evidence" value="ECO:0000315"/>
    <property type="project" value="UniProtKB"/>
</dbReference>
<dbReference type="GO" id="GO:0034143">
    <property type="term" value="P:regulation of toll-like receptor 4 signaling pathway"/>
    <property type="evidence" value="ECO:0000315"/>
    <property type="project" value="UniProtKB"/>
</dbReference>
<dbReference type="InterPro" id="IPR048661">
    <property type="entry name" value="CPL1-like"/>
</dbReference>
<dbReference type="InterPro" id="IPR038955">
    <property type="entry name" value="PriA/CPL1_fungi"/>
</dbReference>
<dbReference type="PANTHER" id="PTHR35192:SF2">
    <property type="entry name" value="APPLE DOMAIN-CONTAINING PROTEIN"/>
    <property type="match status" value="1"/>
</dbReference>
<dbReference type="PANTHER" id="PTHR35192">
    <property type="entry name" value="PROTEIN, PUTATIVE-RELATED"/>
    <property type="match status" value="1"/>
</dbReference>
<dbReference type="Pfam" id="PF21671">
    <property type="entry name" value="CPL1-like"/>
    <property type="match status" value="1"/>
</dbReference>